<dbReference type="EC" id="4.2.1.20" evidence="1"/>
<dbReference type="EMBL" id="CP001177">
    <property type="protein sequence ID" value="ACJ77655.1"/>
    <property type="molecule type" value="Genomic_DNA"/>
</dbReference>
<dbReference type="SMR" id="B7I0F2"/>
<dbReference type="KEGG" id="bcr:BCAH187_A1398"/>
<dbReference type="HOGENOM" id="CLU_016734_3_1_9"/>
<dbReference type="UniPathway" id="UPA00035">
    <property type="reaction ID" value="UER00044"/>
</dbReference>
<dbReference type="Proteomes" id="UP000002214">
    <property type="component" value="Chromosome"/>
</dbReference>
<dbReference type="GO" id="GO:0005737">
    <property type="term" value="C:cytoplasm"/>
    <property type="evidence" value="ECO:0007669"/>
    <property type="project" value="TreeGrafter"/>
</dbReference>
<dbReference type="GO" id="GO:0004834">
    <property type="term" value="F:tryptophan synthase activity"/>
    <property type="evidence" value="ECO:0007669"/>
    <property type="project" value="UniProtKB-UniRule"/>
</dbReference>
<dbReference type="CDD" id="cd06446">
    <property type="entry name" value="Trp-synth_B"/>
    <property type="match status" value="1"/>
</dbReference>
<dbReference type="FunFam" id="3.40.50.1100:FF:000001">
    <property type="entry name" value="Tryptophan synthase beta chain"/>
    <property type="match status" value="1"/>
</dbReference>
<dbReference type="FunFam" id="3.40.50.1100:FF:000004">
    <property type="entry name" value="Tryptophan synthase beta chain"/>
    <property type="match status" value="1"/>
</dbReference>
<dbReference type="Gene3D" id="3.40.50.1100">
    <property type="match status" value="2"/>
</dbReference>
<dbReference type="HAMAP" id="MF_00133">
    <property type="entry name" value="Trp_synth_beta"/>
    <property type="match status" value="1"/>
</dbReference>
<dbReference type="InterPro" id="IPR006653">
    <property type="entry name" value="Trp_synth_b_CS"/>
</dbReference>
<dbReference type="InterPro" id="IPR006654">
    <property type="entry name" value="Trp_synth_beta"/>
</dbReference>
<dbReference type="InterPro" id="IPR023026">
    <property type="entry name" value="Trp_synth_beta/beta-like"/>
</dbReference>
<dbReference type="InterPro" id="IPR001926">
    <property type="entry name" value="TrpB-like_PALP"/>
</dbReference>
<dbReference type="InterPro" id="IPR036052">
    <property type="entry name" value="TrpB-like_PALP_sf"/>
</dbReference>
<dbReference type="NCBIfam" id="TIGR00263">
    <property type="entry name" value="trpB"/>
    <property type="match status" value="1"/>
</dbReference>
<dbReference type="PANTHER" id="PTHR48077:SF3">
    <property type="entry name" value="TRYPTOPHAN SYNTHASE"/>
    <property type="match status" value="1"/>
</dbReference>
<dbReference type="PANTHER" id="PTHR48077">
    <property type="entry name" value="TRYPTOPHAN SYNTHASE-RELATED"/>
    <property type="match status" value="1"/>
</dbReference>
<dbReference type="Pfam" id="PF00291">
    <property type="entry name" value="PALP"/>
    <property type="match status" value="1"/>
</dbReference>
<dbReference type="PIRSF" id="PIRSF001413">
    <property type="entry name" value="Trp_syn_beta"/>
    <property type="match status" value="1"/>
</dbReference>
<dbReference type="SUPFAM" id="SSF53686">
    <property type="entry name" value="Tryptophan synthase beta subunit-like PLP-dependent enzymes"/>
    <property type="match status" value="1"/>
</dbReference>
<dbReference type="PROSITE" id="PS00168">
    <property type="entry name" value="TRP_SYNTHASE_BETA"/>
    <property type="match status" value="1"/>
</dbReference>
<keyword id="KW-0028">Amino-acid biosynthesis</keyword>
<keyword id="KW-0057">Aromatic amino acid biosynthesis</keyword>
<keyword id="KW-0456">Lyase</keyword>
<keyword id="KW-0663">Pyridoxal phosphate</keyword>
<keyword id="KW-0822">Tryptophan biosynthesis</keyword>
<accession>B7I0F2</accession>
<gene>
    <name evidence="1" type="primary">trpB</name>
    <name type="ordered locus">BCAH187_A1398</name>
</gene>
<sequence length="397" mass="43647">MNYAYPDEKGHYGIYGGRYVPETLMQSVLELEEAYKEAMEDEEFQKELNHYLKTYVGRETPLYFAENMTEYCGGAKIYLKREDLNHTGAHKINNTIGQALLAVRMGKKKVVAETGAGQHGVATATVCALLGLECVIFMGEEDVRRQKLNVFRMELLGAKVESVAAGSGTLKDAVNEALRYWVSHVHDTHYIMGSVLGPHPFPQIVRDFQSVIGNETKKQYEALEGKLPEAVVACIGGGSNAMGMFYPFVHDEEVALYGVEAAGKGVHTEKHAATLTKGSVGVLHGSMMYLLQNEEGQIQEAHSISAGLDYPGVGPEHSLLKDIGRVSYHSITDDEALEAFQLLTKKEGIIPALESSHAVAYALKLAPQMKKDEGLVICLSGRGDKDVESIKRYMEEV</sequence>
<evidence type="ECO:0000255" key="1">
    <source>
        <dbReference type="HAMAP-Rule" id="MF_00133"/>
    </source>
</evidence>
<comment type="function">
    <text evidence="1">The beta subunit is responsible for the synthesis of L-tryptophan from indole and L-serine.</text>
</comment>
<comment type="catalytic activity">
    <reaction evidence="1">
        <text>(1S,2R)-1-C-(indol-3-yl)glycerol 3-phosphate + L-serine = D-glyceraldehyde 3-phosphate + L-tryptophan + H2O</text>
        <dbReference type="Rhea" id="RHEA:10532"/>
        <dbReference type="ChEBI" id="CHEBI:15377"/>
        <dbReference type="ChEBI" id="CHEBI:33384"/>
        <dbReference type="ChEBI" id="CHEBI:57912"/>
        <dbReference type="ChEBI" id="CHEBI:58866"/>
        <dbReference type="ChEBI" id="CHEBI:59776"/>
        <dbReference type="EC" id="4.2.1.20"/>
    </reaction>
</comment>
<comment type="cofactor">
    <cofactor evidence="1">
        <name>pyridoxal 5'-phosphate</name>
        <dbReference type="ChEBI" id="CHEBI:597326"/>
    </cofactor>
</comment>
<comment type="pathway">
    <text evidence="1">Amino-acid biosynthesis; L-tryptophan biosynthesis; L-tryptophan from chorismate: step 5/5.</text>
</comment>
<comment type="subunit">
    <text evidence="1">Tetramer of two alpha and two beta chains.</text>
</comment>
<comment type="similarity">
    <text evidence="1">Belongs to the TrpB family.</text>
</comment>
<reference key="1">
    <citation type="submission" date="2008-10" db="EMBL/GenBank/DDBJ databases">
        <title>Genome sequence of Bacillus cereus AH187.</title>
        <authorList>
            <person name="Dodson R.J."/>
            <person name="Durkin A.S."/>
            <person name="Rosovitz M.J."/>
            <person name="Rasko D.A."/>
            <person name="Kolsto A.B."/>
            <person name="Okstad O.A."/>
            <person name="Ravel J."/>
            <person name="Sutton G."/>
        </authorList>
    </citation>
    <scope>NUCLEOTIDE SEQUENCE [LARGE SCALE GENOMIC DNA]</scope>
    <source>
        <strain>AH187</strain>
    </source>
</reference>
<organism>
    <name type="scientific">Bacillus cereus (strain AH187)</name>
    <dbReference type="NCBI Taxonomy" id="405534"/>
    <lineage>
        <taxon>Bacteria</taxon>
        <taxon>Bacillati</taxon>
        <taxon>Bacillota</taxon>
        <taxon>Bacilli</taxon>
        <taxon>Bacillales</taxon>
        <taxon>Bacillaceae</taxon>
        <taxon>Bacillus</taxon>
        <taxon>Bacillus cereus group</taxon>
    </lineage>
</organism>
<feature type="chain" id="PRO_1000117751" description="Tryptophan synthase beta chain">
    <location>
        <begin position="1"/>
        <end position="397"/>
    </location>
</feature>
<feature type="modified residue" description="N6-(pyridoxal phosphate)lysine" evidence="1">
    <location>
        <position position="91"/>
    </location>
</feature>
<proteinExistence type="inferred from homology"/>
<name>TRPB_BACC7</name>
<protein>
    <recommendedName>
        <fullName evidence="1">Tryptophan synthase beta chain</fullName>
        <ecNumber evidence="1">4.2.1.20</ecNumber>
    </recommendedName>
</protein>